<sequence>MKAELIAVGTEILTGQIVNTNAQFLSEKMAELGIDVYFQTAVGDNEERLLSVITTASQRSDLVILCGGLGPTKDDLTKQTLAKYLRRDLVYDEQACQKLDDFFAKRKPSSRTPNNERQAQVIEGSIPLPNKTGLAVGGFITVDGISYVVLPGPPSELKPIVNEELVPLLSKQYSTLYSKVLRFFGIGESQLVTVLSDFIENQTDPTIAPYAKTGEVTLRLSTKTENQALADKKLGQLEAQLLSRKTLEGQPLADVFYGYGEDNSLARETFELLVKYDKSITAAESLTAGLFQSTLASFPGASQVFNGGFVTYSMEEKAKMLGLPLEELKSHGVVSAYTAEGMAEQARLLTGADIGVSLTGVAGPDMLEEQPAGTVFIGLATQNKVESIKVLISGRSRLDVCYIATLHAFNMVRKTLLKLENLL</sequence>
<proteinExistence type="inferred from homology"/>
<reference key="1">
    <citation type="journal article" date="2006" name="Proc. Natl. Acad. Sci. U.S.A.">
        <title>Molecular genetic anatomy of inter- and intraserotype variation in the human bacterial pathogen group A Streptococcus.</title>
        <authorList>
            <person name="Beres S.B."/>
            <person name="Richter E.W."/>
            <person name="Nagiec M.J."/>
            <person name="Sumby P."/>
            <person name="Porcella S.F."/>
            <person name="DeLeo F.R."/>
            <person name="Musser J.M."/>
        </authorList>
    </citation>
    <scope>NUCLEOTIDE SEQUENCE [LARGE SCALE GENOMIC DNA]</scope>
    <source>
        <strain>MGAS10750</strain>
    </source>
</reference>
<accession>Q1J494</accession>
<comment type="similarity">
    <text evidence="1">Belongs to the CinA family.</text>
</comment>
<protein>
    <recommendedName>
        <fullName evidence="1">Putative competence-damage inducible protein</fullName>
    </recommendedName>
</protein>
<name>CINA_STRPF</name>
<dbReference type="EMBL" id="CP000262">
    <property type="protein sequence ID" value="ABF38842.1"/>
    <property type="molecule type" value="Genomic_DNA"/>
</dbReference>
<dbReference type="SMR" id="Q1J494"/>
<dbReference type="KEGG" id="spi:MGAS10750_Spy1892"/>
<dbReference type="HOGENOM" id="CLU_030805_9_3_9"/>
<dbReference type="Proteomes" id="UP000002434">
    <property type="component" value="Chromosome"/>
</dbReference>
<dbReference type="CDD" id="cd00885">
    <property type="entry name" value="cinA"/>
    <property type="match status" value="1"/>
</dbReference>
<dbReference type="Gene3D" id="3.30.70.2860">
    <property type="match status" value="1"/>
</dbReference>
<dbReference type="Gene3D" id="3.90.950.20">
    <property type="entry name" value="CinA-like"/>
    <property type="match status" value="1"/>
</dbReference>
<dbReference type="Gene3D" id="3.40.980.10">
    <property type="entry name" value="MoaB/Mog-like domain"/>
    <property type="match status" value="1"/>
</dbReference>
<dbReference type="HAMAP" id="MF_00226_B">
    <property type="entry name" value="CinA_B"/>
    <property type="match status" value="1"/>
</dbReference>
<dbReference type="InterPro" id="IPR050101">
    <property type="entry name" value="CinA"/>
</dbReference>
<dbReference type="InterPro" id="IPR036653">
    <property type="entry name" value="CinA-like_C"/>
</dbReference>
<dbReference type="InterPro" id="IPR008136">
    <property type="entry name" value="CinA_C"/>
</dbReference>
<dbReference type="InterPro" id="IPR041424">
    <property type="entry name" value="CinA_KH"/>
</dbReference>
<dbReference type="InterPro" id="IPR008135">
    <property type="entry name" value="Competence-induced_CinA"/>
</dbReference>
<dbReference type="InterPro" id="IPR036425">
    <property type="entry name" value="MoaB/Mog-like_dom_sf"/>
</dbReference>
<dbReference type="InterPro" id="IPR001453">
    <property type="entry name" value="MoaB/Mog_dom"/>
</dbReference>
<dbReference type="NCBIfam" id="TIGR00200">
    <property type="entry name" value="cinA_nterm"/>
    <property type="match status" value="1"/>
</dbReference>
<dbReference type="NCBIfam" id="TIGR00177">
    <property type="entry name" value="molyb_syn"/>
    <property type="match status" value="1"/>
</dbReference>
<dbReference type="NCBIfam" id="TIGR00199">
    <property type="entry name" value="PncC_domain"/>
    <property type="match status" value="1"/>
</dbReference>
<dbReference type="NCBIfam" id="NF001813">
    <property type="entry name" value="PRK00549.1"/>
    <property type="match status" value="1"/>
</dbReference>
<dbReference type="PANTHER" id="PTHR13939">
    <property type="entry name" value="NICOTINAMIDE-NUCLEOTIDE AMIDOHYDROLASE PNCC"/>
    <property type="match status" value="1"/>
</dbReference>
<dbReference type="PANTHER" id="PTHR13939:SF0">
    <property type="entry name" value="NMN AMIDOHYDROLASE-LIKE PROTEIN YFAY"/>
    <property type="match status" value="1"/>
</dbReference>
<dbReference type="Pfam" id="PF02464">
    <property type="entry name" value="CinA"/>
    <property type="match status" value="1"/>
</dbReference>
<dbReference type="Pfam" id="PF18146">
    <property type="entry name" value="CinA_KH"/>
    <property type="match status" value="1"/>
</dbReference>
<dbReference type="Pfam" id="PF00994">
    <property type="entry name" value="MoCF_biosynth"/>
    <property type="match status" value="1"/>
</dbReference>
<dbReference type="PIRSF" id="PIRSF006728">
    <property type="entry name" value="CinA"/>
    <property type="match status" value="1"/>
</dbReference>
<dbReference type="SMART" id="SM00852">
    <property type="entry name" value="MoCF_biosynth"/>
    <property type="match status" value="1"/>
</dbReference>
<dbReference type="SUPFAM" id="SSF142433">
    <property type="entry name" value="CinA-like"/>
    <property type="match status" value="1"/>
</dbReference>
<dbReference type="SUPFAM" id="SSF53218">
    <property type="entry name" value="Molybdenum cofactor biosynthesis proteins"/>
    <property type="match status" value="1"/>
</dbReference>
<feature type="chain" id="PRO_1000058734" description="Putative competence-damage inducible protein">
    <location>
        <begin position="1"/>
        <end position="423"/>
    </location>
</feature>
<evidence type="ECO:0000255" key="1">
    <source>
        <dbReference type="HAMAP-Rule" id="MF_00226"/>
    </source>
</evidence>
<organism>
    <name type="scientific">Streptococcus pyogenes serotype M4 (strain MGAS10750)</name>
    <dbReference type="NCBI Taxonomy" id="370554"/>
    <lineage>
        <taxon>Bacteria</taxon>
        <taxon>Bacillati</taxon>
        <taxon>Bacillota</taxon>
        <taxon>Bacilli</taxon>
        <taxon>Lactobacillales</taxon>
        <taxon>Streptococcaceae</taxon>
        <taxon>Streptococcus</taxon>
    </lineage>
</organism>
<gene>
    <name evidence="1" type="primary">cinA</name>
    <name type="ordered locus">MGAS10750_Spy1892</name>
</gene>